<dbReference type="EMBL" id="U01142">
    <property type="status" value="NOT_ANNOTATED_CDS"/>
    <property type="molecule type" value="Unassigned_DNA"/>
</dbReference>
<dbReference type="EMBL" id="L22858">
    <property type="protein sequence ID" value="AAA66754.1"/>
    <property type="molecule type" value="Genomic_DNA"/>
</dbReference>
<dbReference type="PIR" id="E72865">
    <property type="entry name" value="E72865"/>
</dbReference>
<dbReference type="RefSeq" id="NP_054154.1">
    <property type="nucleotide sequence ID" value="NC_001623.1"/>
</dbReference>
<dbReference type="GeneID" id="1403957"/>
<dbReference type="KEGG" id="vg:1403957"/>
<dbReference type="OrthoDB" id="11490at10239"/>
<dbReference type="Proteomes" id="UP000008292">
    <property type="component" value="Segment"/>
</dbReference>
<dbReference type="GO" id="GO:0030430">
    <property type="term" value="C:host cell cytoplasm"/>
    <property type="evidence" value="ECO:0007669"/>
    <property type="project" value="UniProtKB-SubCell"/>
</dbReference>
<dbReference type="GO" id="GO:0042025">
    <property type="term" value="C:host cell nucleus"/>
    <property type="evidence" value="ECO:0007669"/>
    <property type="project" value="UniProtKB-SubCell"/>
</dbReference>
<protein>
    <recommendedName>
        <fullName>Protein AC124</fullName>
    </recommendedName>
</protein>
<reference key="1">
    <citation type="journal article" date="1994" name="Virology">
        <title>Identification of lef-7: a baculovirus gene affecting late gene expression.</title>
        <authorList>
            <person name="Morris T.D."/>
            <person name="Todd J.W."/>
            <person name="Fisher B."/>
            <person name="Miller L.K."/>
        </authorList>
    </citation>
    <scope>NUCLEOTIDE SEQUENCE</scope>
    <source>
        <strain>L1</strain>
    </source>
</reference>
<reference key="2">
    <citation type="journal article" date="1994" name="Virology">
        <title>The complete DNA sequence of Autographa californica nuclear polyhedrosis virus.</title>
        <authorList>
            <person name="Ayres M.D."/>
            <person name="Howard S.C."/>
            <person name="Kuzio J."/>
            <person name="Lopez-Ferber M."/>
            <person name="Possee R.D."/>
        </authorList>
    </citation>
    <scope>NUCLEOTIDE SEQUENCE [LARGE SCALE GENOMIC DNA]</scope>
    <source>
        <strain>C6</strain>
    </source>
</reference>
<reference key="3">
    <citation type="journal article" date="2015" name="Arch. Virol.">
        <title>The Ac124 protein is not essential for the propagation of Autographa californica multiple nucleopolyhedrovirus, but it is a viral pathogenicity factor.</title>
        <authorList>
            <person name="Liang C."/>
            <person name="Lan D."/>
            <person name="Zhao S."/>
            <person name="Liu L."/>
            <person name="Xue Y."/>
            <person name="Zhang Y."/>
            <person name="Wang Y."/>
            <person name="Chen X."/>
        </authorList>
    </citation>
    <scope>FUNCTION</scope>
</reference>
<organismHost>
    <name type="scientific">Lepidoptera</name>
    <name type="common">butterflies and moths</name>
    <dbReference type="NCBI Taxonomy" id="7088"/>
</organismHost>
<sequence length="247" mass="28530">MGLFACCTKYTRLSTDTKMKFPYVALSYINVTLCTYTAMLVGYMVTFNDSSELKYLQYWLLLSFLMSVVLNAPTLWTMLKTTEAHEVIYEMKLFHAMYFSNVLLNYVVFLDNQMGTNFVFVNNLIHCCVLFMIFVELLILLGHTMGTYTDYQYVKSCYMVILFVSVMSVTIVMGLECLKTKLIDNSLMFNAFVCALYIVIAIMWSLKNNLTSYYVSNLQSIQVVPFSYNDPPPPFSNIVMDDIKNKK</sequence>
<keyword id="KW-1035">Host cytoplasm</keyword>
<keyword id="KW-1048">Host nucleus</keyword>
<keyword id="KW-1185">Reference proteome</keyword>
<comment type="function">
    <text evidence="1">Accelerates mortality in insect larvae.</text>
</comment>
<comment type="subcellular location">
    <subcellularLocation>
        <location evidence="1">Host cytoplasm</location>
    </subcellularLocation>
    <subcellularLocation>
        <location evidence="1">Host nucleus</location>
    </subcellularLocation>
    <text evidence="1">Present in the host cytoplasm from 24 hours to 48 hours post infection. At 48 hours, localizes throughout the cytoplasm and the nucleus.</text>
</comment>
<evidence type="ECO:0000269" key="1">
    <source>
    </source>
</evidence>
<organism>
    <name type="scientific">Autographa californica nuclear polyhedrosis virus</name>
    <name type="common">AcMNPV</name>
    <dbReference type="NCBI Taxonomy" id="46015"/>
    <lineage>
        <taxon>Viruses</taxon>
        <taxon>Viruses incertae sedis</taxon>
        <taxon>Naldaviricetes</taxon>
        <taxon>Lefavirales</taxon>
        <taxon>Baculoviridae</taxon>
        <taxon>Alphabaculovirus</taxon>
        <taxon>Alphabaculovirus aucalifornicae</taxon>
    </lineage>
</organism>
<name>AC124_NPVAC</name>
<proteinExistence type="predicted"/>
<accession>P41679</accession>
<feature type="chain" id="PRO_0000133062" description="Protein AC124">
    <location>
        <begin position="1"/>
        <end position="247"/>
    </location>
</feature>